<feature type="chain" id="PRO_1000131719" description="Co-chaperone protein HscB homolog">
    <location>
        <begin position="1"/>
        <end position="172"/>
    </location>
</feature>
<feature type="domain" description="J" evidence="1">
    <location>
        <begin position="2"/>
        <end position="69"/>
    </location>
</feature>
<keyword id="KW-0143">Chaperone</keyword>
<protein>
    <recommendedName>
        <fullName evidence="1">Co-chaperone protein HscB homolog</fullName>
    </recommendedName>
</protein>
<evidence type="ECO:0000255" key="1">
    <source>
        <dbReference type="HAMAP-Rule" id="MF_00682"/>
    </source>
</evidence>
<comment type="function">
    <text evidence="1">Co-chaperone involved in the maturation of iron-sulfur cluster-containing proteins. Seems to help targeting proteins to be folded toward HscA.</text>
</comment>
<comment type="subunit">
    <text evidence="1">Interacts with HscA and stimulates its ATPase activity.</text>
</comment>
<comment type="similarity">
    <text evidence="1">Belongs to the HscB family.</text>
</comment>
<reference key="1">
    <citation type="journal article" date="2008" name="J. Bacteriol.">
        <title>Comparative genome sequence analysis of multidrug-resistant Acinetobacter baumannii.</title>
        <authorList>
            <person name="Adams M.D."/>
            <person name="Goglin K."/>
            <person name="Molyneaux N."/>
            <person name="Hujer K.M."/>
            <person name="Lavender H."/>
            <person name="Jamison J.J."/>
            <person name="MacDonald I.J."/>
            <person name="Martin K.M."/>
            <person name="Russo T."/>
            <person name="Campagnari A.A."/>
            <person name="Hujer A.M."/>
            <person name="Bonomo R.A."/>
            <person name="Gill S.R."/>
        </authorList>
    </citation>
    <scope>NUCLEOTIDE SEQUENCE [LARGE SCALE GENOMIC DNA]</scope>
    <source>
        <strain>AB0057</strain>
    </source>
</reference>
<name>HSCB_ACIB5</name>
<accession>B7I5Q0</accession>
<dbReference type="EMBL" id="CP001182">
    <property type="protein sequence ID" value="ACJ41232.1"/>
    <property type="molecule type" value="Genomic_DNA"/>
</dbReference>
<dbReference type="RefSeq" id="WP_001015254.1">
    <property type="nucleotide sequence ID" value="NC_011586.2"/>
</dbReference>
<dbReference type="SMR" id="B7I5Q0"/>
<dbReference type="GeneID" id="92893838"/>
<dbReference type="KEGG" id="abn:AB57_1853"/>
<dbReference type="HOGENOM" id="CLU_068529_2_0_6"/>
<dbReference type="Proteomes" id="UP000007094">
    <property type="component" value="Chromosome"/>
</dbReference>
<dbReference type="GO" id="GO:0001671">
    <property type="term" value="F:ATPase activator activity"/>
    <property type="evidence" value="ECO:0007669"/>
    <property type="project" value="InterPro"/>
</dbReference>
<dbReference type="GO" id="GO:0051087">
    <property type="term" value="F:protein-folding chaperone binding"/>
    <property type="evidence" value="ECO:0007669"/>
    <property type="project" value="InterPro"/>
</dbReference>
<dbReference type="GO" id="GO:0044571">
    <property type="term" value="P:[2Fe-2S] cluster assembly"/>
    <property type="evidence" value="ECO:0007669"/>
    <property type="project" value="InterPro"/>
</dbReference>
<dbReference type="GO" id="GO:0051259">
    <property type="term" value="P:protein complex oligomerization"/>
    <property type="evidence" value="ECO:0007669"/>
    <property type="project" value="InterPro"/>
</dbReference>
<dbReference type="GO" id="GO:0006457">
    <property type="term" value="P:protein folding"/>
    <property type="evidence" value="ECO:0007669"/>
    <property type="project" value="UniProtKB-UniRule"/>
</dbReference>
<dbReference type="CDD" id="cd06257">
    <property type="entry name" value="DnaJ"/>
    <property type="match status" value="1"/>
</dbReference>
<dbReference type="Gene3D" id="1.10.287.110">
    <property type="entry name" value="DnaJ domain"/>
    <property type="match status" value="1"/>
</dbReference>
<dbReference type="Gene3D" id="1.20.1280.20">
    <property type="entry name" value="HscB, C-terminal domain"/>
    <property type="match status" value="1"/>
</dbReference>
<dbReference type="HAMAP" id="MF_00682">
    <property type="entry name" value="HscB"/>
    <property type="match status" value="1"/>
</dbReference>
<dbReference type="InterPro" id="IPR001623">
    <property type="entry name" value="DnaJ_domain"/>
</dbReference>
<dbReference type="InterPro" id="IPR004640">
    <property type="entry name" value="HscB"/>
</dbReference>
<dbReference type="InterPro" id="IPR036386">
    <property type="entry name" value="HscB_C_sf"/>
</dbReference>
<dbReference type="InterPro" id="IPR009073">
    <property type="entry name" value="HscB_oligo_C"/>
</dbReference>
<dbReference type="InterPro" id="IPR036869">
    <property type="entry name" value="J_dom_sf"/>
</dbReference>
<dbReference type="NCBIfam" id="TIGR00714">
    <property type="entry name" value="hscB"/>
    <property type="match status" value="1"/>
</dbReference>
<dbReference type="PANTHER" id="PTHR14021">
    <property type="entry name" value="IRON-SULFUR CLUSTER CO-CHAPERONE PROTEIN HSCB"/>
    <property type="match status" value="1"/>
</dbReference>
<dbReference type="PANTHER" id="PTHR14021:SF15">
    <property type="entry name" value="IRON-SULFUR CLUSTER CO-CHAPERONE PROTEIN HSCB"/>
    <property type="match status" value="1"/>
</dbReference>
<dbReference type="Pfam" id="PF00226">
    <property type="entry name" value="DnaJ"/>
    <property type="match status" value="1"/>
</dbReference>
<dbReference type="Pfam" id="PF07743">
    <property type="entry name" value="HSCB_C"/>
    <property type="match status" value="1"/>
</dbReference>
<dbReference type="SMART" id="SM00271">
    <property type="entry name" value="DnaJ"/>
    <property type="match status" value="1"/>
</dbReference>
<dbReference type="SUPFAM" id="SSF46565">
    <property type="entry name" value="Chaperone J-domain"/>
    <property type="match status" value="1"/>
</dbReference>
<dbReference type="SUPFAM" id="SSF47144">
    <property type="entry name" value="HSC20 (HSCB), C-terminal oligomerisation domain"/>
    <property type="match status" value="1"/>
</dbReference>
<dbReference type="PROSITE" id="PS50076">
    <property type="entry name" value="DNAJ_2"/>
    <property type="match status" value="1"/>
</dbReference>
<proteinExistence type="inferred from homology"/>
<organism>
    <name type="scientific">Acinetobacter baumannii (strain AB0057)</name>
    <dbReference type="NCBI Taxonomy" id="480119"/>
    <lineage>
        <taxon>Bacteria</taxon>
        <taxon>Pseudomonadati</taxon>
        <taxon>Pseudomonadota</taxon>
        <taxon>Gammaproteobacteria</taxon>
        <taxon>Moraxellales</taxon>
        <taxon>Moraxellaceae</taxon>
        <taxon>Acinetobacter</taxon>
        <taxon>Acinetobacter calcoaceticus/baumannii complex</taxon>
    </lineage>
</organism>
<sequence>MNHFELFNLPVALDIDLASLKSNFLSLQQQYHPDKAADKDQALIKSSEINQAFKTLSQVDSRAAYLLALKKQDHHLDQSISDFEFLQSALELREQLDEATSSEHLRTLRLEVQQWIDGLVREFKIDYSEEDWAEARDTVRKLRFFQRVLNDIDKAEDQLLDDEDSFDLDDDF</sequence>
<gene>
    <name evidence="1" type="primary">hscB</name>
    <name type="ordered locus">AB57_1853</name>
</gene>